<protein>
    <recommendedName>
        <fullName>E3 ubiquitin-protein ligase TRIM69</fullName>
        <ecNumber>2.3.2.27</ecNumber>
    </recommendedName>
    <alternativeName>
        <fullName>RING finger B-box coiled-coil transcription factor</fullName>
    </alternativeName>
    <alternativeName>
        <fullName>RING finger protein 36</fullName>
    </alternativeName>
    <alternativeName>
        <fullName evidence="10">RING-type E3 ubiquitin transferase TRIM69</fullName>
    </alternativeName>
    <alternativeName>
        <fullName>Testis-specific RING finger protein</fullName>
    </alternativeName>
    <alternativeName>
        <fullName>Tripartite motif-containing protein 69</fullName>
    </alternativeName>
</protein>
<comment type="function">
    <text evidence="2">E3 ubiquitin ligase that plays an important role in antiviral immunity by restricting different viral infections including dengue virus or vesicular stomatitis indiana virus. Ubiquitinates viral proteins such as dengue virus NS3 thereby limiting infection. In addition, acts as a key mediator of type I interferon induced microtubule stabilization by directly associating to microtubules independently of its E3 ligase activity. Also plays a role in cataract formation together with TP53. Mechanistically, inhibits UVB-induced cell apoptosis and reactive oxygen species (ROS) production by inducing TP53 ubiquitination. Regulates centrosome dynamics and mitotic progression by ubiquitinating STK3/MST2; leading to its redistribution to the perinuclear cytoskeleton and subsequent phosphorylation by PLK1.</text>
</comment>
<comment type="catalytic activity">
    <reaction evidence="2">
        <text>S-ubiquitinyl-[E2 ubiquitin-conjugating enzyme]-L-cysteine + [acceptor protein]-L-lysine = [E2 ubiquitin-conjugating enzyme]-L-cysteine + N(6)-ubiquitinyl-[acceptor protein]-L-lysine.</text>
        <dbReference type="EC" id="2.3.2.27"/>
    </reaction>
</comment>
<comment type="pathway">
    <text>Protein modification; protein ubiquitination.</text>
</comment>
<comment type="subunit">
    <text evidence="2">Homo-multimer; required for antiviral activity (By similarity). Interacts with PML (PubMed:12837286).</text>
</comment>
<comment type="subcellular location">
    <subcellularLocation>
        <location evidence="2">Cytoplasm</location>
    </subcellularLocation>
    <subcellularLocation>
        <location evidence="2">Nucleus</location>
    </subcellularLocation>
    <subcellularLocation>
        <location evidence="2">Nucleus speckle</location>
    </subcellularLocation>
    <subcellularLocation>
        <location evidence="2">Cytoplasm</location>
        <location evidence="2">Cytoskeleton</location>
        <location evidence="2">Microtubule organizing center</location>
        <location evidence="2">Centrosome</location>
    </subcellularLocation>
    <text evidence="2">Adopts a filamentous distribution in the cell cytoplasm where it strongly colocalizes with stable microtubules.</text>
</comment>
<comment type="tissue specificity">
    <text evidence="7">Expressed in spermatid.</text>
</comment>
<comment type="domain">
    <text evidence="2">The RING-type zinc finger domain is responsible for E3 ubiquitin ligase activity and for nuclear localization and aggregation.</text>
</comment>
<comment type="PTM">
    <text evidence="8">Phosphorylated. Phosphorylation is necessary for nuclear localization.</text>
</comment>
<comment type="disruption phenotype">
    <text evidence="9">Male TRIM69-knockout mice have normal fertility. Appearance of testes, testis/body weight ratios, testicular histomorphology, and the number and quality of sperm are consistent with wild-type mice.</text>
</comment>
<comment type="similarity">
    <text evidence="10">Belongs to the TRIM/RBCC family.</text>
</comment>
<reference key="1">
    <citation type="journal article" date="2001" name="Mech. Dev.">
        <title>A novel member of the RBCC family, Trif, expressed specifically in the spermatids of mouse testis.</title>
        <authorList>
            <person name="Shyu H.-W."/>
            <person name="Hsu S.-H."/>
            <person name="Hsieh-Li H.-L."/>
            <person name="Li H."/>
        </authorList>
    </citation>
    <scope>NUCLEOTIDE SEQUENCE [MRNA]</scope>
    <scope>TISSUE SPECIFICITY</scope>
    <source>
        <strain>C57BL/6J</strain>
        <tissue>Testis</tissue>
    </source>
</reference>
<reference key="2">
    <citation type="journal article" date="2009" name="PLoS Biol.">
        <title>Lineage-specific biology revealed by a finished genome assembly of the mouse.</title>
        <authorList>
            <person name="Church D.M."/>
            <person name="Goodstadt L."/>
            <person name="Hillier L.W."/>
            <person name="Zody M.C."/>
            <person name="Goldstein S."/>
            <person name="She X."/>
            <person name="Bult C.J."/>
            <person name="Agarwala R."/>
            <person name="Cherry J.L."/>
            <person name="DiCuccio M."/>
            <person name="Hlavina W."/>
            <person name="Kapustin Y."/>
            <person name="Meric P."/>
            <person name="Maglott D."/>
            <person name="Birtle Z."/>
            <person name="Marques A.C."/>
            <person name="Graves T."/>
            <person name="Zhou S."/>
            <person name="Teague B."/>
            <person name="Potamousis K."/>
            <person name="Churas C."/>
            <person name="Place M."/>
            <person name="Herschleb J."/>
            <person name="Runnheim R."/>
            <person name="Forrest D."/>
            <person name="Amos-Landgraf J."/>
            <person name="Schwartz D.C."/>
            <person name="Cheng Z."/>
            <person name="Lindblad-Toh K."/>
            <person name="Eichler E.E."/>
            <person name="Ponting C.P."/>
        </authorList>
    </citation>
    <scope>NUCLEOTIDE SEQUENCE [LARGE SCALE GENOMIC DNA]</scope>
    <source>
        <strain>C57BL/6J</strain>
    </source>
</reference>
<reference key="3">
    <citation type="journal article" date="2004" name="Genome Res.">
        <title>The status, quality, and expansion of the NIH full-length cDNA project: the Mammalian Gene Collection (MGC).</title>
        <authorList>
            <consortium name="The MGC Project Team"/>
        </authorList>
    </citation>
    <scope>NUCLEOTIDE SEQUENCE [LARGE SCALE MRNA]</scope>
    <source>
        <tissue>Testis</tissue>
    </source>
</reference>
<reference key="4">
    <citation type="journal article" date="2003" name="Exp. Cell Res.">
        <title>Forced expression of RNF36 induces cell apoptosis.</title>
        <authorList>
            <person name="Shyu H.-W."/>
            <person name="Hsu S.-H."/>
            <person name="Hsieh-Li H.-M."/>
            <person name="Li H."/>
        </authorList>
    </citation>
    <scope>INTERACTION WITH PML</scope>
    <scope>PHOSPHORYLATION</scope>
</reference>
<reference key="5">
    <citation type="journal article" date="2020" name="J. Biomed. Res.">
        <title>The testis-specifically expressed gene Trim69 is not essential for fertility in mice.</title>
        <authorList>
            <person name="He X."/>
            <person name="Xie W."/>
            <person name="Li H."/>
            <person name="Cui Y."/>
            <person name="Wang Y."/>
            <person name="Guo X."/>
            <person name="Sha J."/>
        </authorList>
    </citation>
    <scope>DISRUPTION PHENOTYPE</scope>
</reference>
<name>TRI69_MOUSE</name>
<dbReference type="EC" id="2.3.2.27"/>
<dbReference type="EMBL" id="AF334958">
    <property type="protein sequence ID" value="AAL41031.1"/>
    <property type="molecule type" value="mRNA"/>
</dbReference>
<dbReference type="EMBL" id="AL845457">
    <property type="status" value="NOT_ANNOTATED_CDS"/>
    <property type="molecule type" value="Genomic_DNA"/>
</dbReference>
<dbReference type="EMBL" id="BC050815">
    <property type="protein sequence ID" value="AAH50815.1"/>
    <property type="molecule type" value="mRNA"/>
</dbReference>
<dbReference type="CCDS" id="CCDS16655.1"/>
<dbReference type="RefSeq" id="NP_536771.2">
    <property type="nucleotide sequence ID" value="NM_080510.3"/>
</dbReference>
<dbReference type="SMR" id="Q80X56"/>
<dbReference type="BioGRID" id="214351">
    <property type="interactions" value="41"/>
</dbReference>
<dbReference type="FunCoup" id="Q80X56">
    <property type="interactions" value="962"/>
</dbReference>
<dbReference type="IntAct" id="Q80X56">
    <property type="interactions" value="40"/>
</dbReference>
<dbReference type="STRING" id="10090.ENSMUSP00000047627"/>
<dbReference type="iPTMnet" id="Q80X56"/>
<dbReference type="PhosphoSitePlus" id="Q80X56"/>
<dbReference type="SwissPalm" id="Q80X56"/>
<dbReference type="jPOST" id="Q80X56"/>
<dbReference type="PaxDb" id="10090-ENSMUSP00000047627"/>
<dbReference type="ProteomicsDB" id="259095"/>
<dbReference type="Antibodypedia" id="24281">
    <property type="antibodies" value="321 antibodies from 34 providers"/>
</dbReference>
<dbReference type="DNASU" id="70928"/>
<dbReference type="Ensembl" id="ENSMUST00000036089.8">
    <property type="protein sequence ID" value="ENSMUSP00000047627.8"/>
    <property type="gene ID" value="ENSMUSG00000033368.9"/>
</dbReference>
<dbReference type="GeneID" id="70928"/>
<dbReference type="KEGG" id="mmu:70928"/>
<dbReference type="UCSC" id="uc008mah.1">
    <property type="organism name" value="mouse"/>
</dbReference>
<dbReference type="AGR" id="MGI:1918178"/>
<dbReference type="CTD" id="140691"/>
<dbReference type="MGI" id="MGI:1918178">
    <property type="gene designation" value="Trim69"/>
</dbReference>
<dbReference type="VEuPathDB" id="HostDB:ENSMUSG00000033368"/>
<dbReference type="eggNOG" id="KOG2177">
    <property type="taxonomic scope" value="Eukaryota"/>
</dbReference>
<dbReference type="GeneTree" id="ENSGT00940000160707"/>
<dbReference type="HOGENOM" id="CLU_013137_0_3_1"/>
<dbReference type="InParanoid" id="Q80X56"/>
<dbReference type="OMA" id="TEELTIH"/>
<dbReference type="OrthoDB" id="6270329at2759"/>
<dbReference type="PhylomeDB" id="Q80X56"/>
<dbReference type="TreeFam" id="TF342569"/>
<dbReference type="Reactome" id="R-MMU-983168">
    <property type="pathway name" value="Antigen processing: Ubiquitination &amp; Proteasome degradation"/>
</dbReference>
<dbReference type="UniPathway" id="UPA00143"/>
<dbReference type="BioGRID-ORCS" id="70928">
    <property type="hits" value="1 hit in 77 CRISPR screens"/>
</dbReference>
<dbReference type="ChiTaRS" id="Trim69">
    <property type="organism name" value="mouse"/>
</dbReference>
<dbReference type="PRO" id="PR:Q80X56"/>
<dbReference type="Proteomes" id="UP000000589">
    <property type="component" value="Chromosome 2"/>
</dbReference>
<dbReference type="RNAct" id="Q80X56">
    <property type="molecule type" value="protein"/>
</dbReference>
<dbReference type="Bgee" id="ENSMUSG00000033368">
    <property type="expression patterns" value="Expressed in spermatid and 11 other cell types or tissues"/>
</dbReference>
<dbReference type="GO" id="GO:0005813">
    <property type="term" value="C:centrosome"/>
    <property type="evidence" value="ECO:0007669"/>
    <property type="project" value="UniProtKB-SubCell"/>
</dbReference>
<dbReference type="GO" id="GO:0005737">
    <property type="term" value="C:cytoplasm"/>
    <property type="evidence" value="ECO:0000250"/>
    <property type="project" value="UniProtKB"/>
</dbReference>
<dbReference type="GO" id="GO:0016607">
    <property type="term" value="C:nuclear speck"/>
    <property type="evidence" value="ECO:0000250"/>
    <property type="project" value="UniProtKB"/>
</dbReference>
<dbReference type="GO" id="GO:0005634">
    <property type="term" value="C:nucleus"/>
    <property type="evidence" value="ECO:0000250"/>
    <property type="project" value="UniProtKB"/>
</dbReference>
<dbReference type="GO" id="GO:0061630">
    <property type="term" value="F:ubiquitin protein ligase activity"/>
    <property type="evidence" value="ECO:0007669"/>
    <property type="project" value="Ensembl"/>
</dbReference>
<dbReference type="GO" id="GO:0004842">
    <property type="term" value="F:ubiquitin-protein transferase activity"/>
    <property type="evidence" value="ECO:0000250"/>
    <property type="project" value="UniProtKB"/>
</dbReference>
<dbReference type="GO" id="GO:0008270">
    <property type="term" value="F:zinc ion binding"/>
    <property type="evidence" value="ECO:0007669"/>
    <property type="project" value="UniProtKB-KW"/>
</dbReference>
<dbReference type="GO" id="GO:0006915">
    <property type="term" value="P:apoptotic process"/>
    <property type="evidence" value="ECO:0007669"/>
    <property type="project" value="UniProtKB-KW"/>
</dbReference>
<dbReference type="GO" id="GO:0071539">
    <property type="term" value="P:protein localization to centrosome"/>
    <property type="evidence" value="ECO:0007669"/>
    <property type="project" value="Ensembl"/>
</dbReference>
<dbReference type="GO" id="GO:0016567">
    <property type="term" value="P:protein ubiquitination"/>
    <property type="evidence" value="ECO:0007669"/>
    <property type="project" value="UniProtKB-UniPathway"/>
</dbReference>
<dbReference type="CDD" id="cd16611">
    <property type="entry name" value="RING-HC_TRIM69_C-IV"/>
    <property type="match status" value="1"/>
</dbReference>
<dbReference type="FunFam" id="2.60.120.920:FF:000058">
    <property type="entry name" value="E3 ubiquitin-protein ligase TRIM69"/>
    <property type="match status" value="1"/>
</dbReference>
<dbReference type="FunFam" id="3.30.160.60:FF:002162">
    <property type="entry name" value="E3 ubiquitin-protein ligase TRIM69"/>
    <property type="match status" value="1"/>
</dbReference>
<dbReference type="FunFam" id="3.30.40.10:FF:000583">
    <property type="entry name" value="E3 ubiquitin-protein ligase TRIM69"/>
    <property type="match status" value="1"/>
</dbReference>
<dbReference type="Gene3D" id="2.60.120.920">
    <property type="match status" value="1"/>
</dbReference>
<dbReference type="Gene3D" id="3.30.160.60">
    <property type="entry name" value="Classic Zinc Finger"/>
    <property type="match status" value="1"/>
</dbReference>
<dbReference type="Gene3D" id="3.30.40.10">
    <property type="entry name" value="Zinc/RING finger domain, C3HC4 (zinc finger)"/>
    <property type="match status" value="1"/>
</dbReference>
<dbReference type="InterPro" id="IPR001870">
    <property type="entry name" value="B30.2/SPRY"/>
</dbReference>
<dbReference type="InterPro" id="IPR043136">
    <property type="entry name" value="B30.2/SPRY_sf"/>
</dbReference>
<dbReference type="InterPro" id="IPR003879">
    <property type="entry name" value="Butyrophylin_SPRY"/>
</dbReference>
<dbReference type="InterPro" id="IPR013320">
    <property type="entry name" value="ConA-like_dom_sf"/>
</dbReference>
<dbReference type="InterPro" id="IPR006574">
    <property type="entry name" value="PRY"/>
</dbReference>
<dbReference type="InterPro" id="IPR003877">
    <property type="entry name" value="SPRY_dom"/>
</dbReference>
<dbReference type="InterPro" id="IPR050143">
    <property type="entry name" value="TRIM/RBCC"/>
</dbReference>
<dbReference type="InterPro" id="IPR001841">
    <property type="entry name" value="Znf_RING"/>
</dbReference>
<dbReference type="InterPro" id="IPR013083">
    <property type="entry name" value="Znf_RING/FYVE/PHD"/>
</dbReference>
<dbReference type="InterPro" id="IPR017907">
    <property type="entry name" value="Znf_RING_CS"/>
</dbReference>
<dbReference type="PANTHER" id="PTHR24103">
    <property type="entry name" value="E3 UBIQUITIN-PROTEIN LIGASE TRIM"/>
    <property type="match status" value="1"/>
</dbReference>
<dbReference type="Pfam" id="PF13765">
    <property type="entry name" value="PRY"/>
    <property type="match status" value="1"/>
</dbReference>
<dbReference type="Pfam" id="PF00622">
    <property type="entry name" value="SPRY"/>
    <property type="match status" value="1"/>
</dbReference>
<dbReference type="Pfam" id="PF15227">
    <property type="entry name" value="zf-C3HC4_4"/>
    <property type="match status" value="1"/>
</dbReference>
<dbReference type="PRINTS" id="PR01407">
    <property type="entry name" value="BUTYPHLNCDUF"/>
</dbReference>
<dbReference type="SMART" id="SM00589">
    <property type="entry name" value="PRY"/>
    <property type="match status" value="1"/>
</dbReference>
<dbReference type="SMART" id="SM00184">
    <property type="entry name" value="RING"/>
    <property type="match status" value="1"/>
</dbReference>
<dbReference type="SMART" id="SM00449">
    <property type="entry name" value="SPRY"/>
    <property type="match status" value="1"/>
</dbReference>
<dbReference type="SUPFAM" id="SSF49899">
    <property type="entry name" value="Concanavalin A-like lectins/glucanases"/>
    <property type="match status" value="1"/>
</dbReference>
<dbReference type="SUPFAM" id="SSF57850">
    <property type="entry name" value="RING/U-box"/>
    <property type="match status" value="1"/>
</dbReference>
<dbReference type="PROSITE" id="PS50188">
    <property type="entry name" value="B302_SPRY"/>
    <property type="match status" value="1"/>
</dbReference>
<dbReference type="PROSITE" id="PS00518">
    <property type="entry name" value="ZF_RING_1"/>
    <property type="match status" value="1"/>
</dbReference>
<dbReference type="PROSITE" id="PS50089">
    <property type="entry name" value="ZF_RING_2"/>
    <property type="match status" value="1"/>
</dbReference>
<gene>
    <name type="primary">Trim69</name>
    <name type="synonym">Rnf36</name>
    <name type="synonym">Trif</name>
</gene>
<proteinExistence type="evidence at protein level"/>
<organism>
    <name type="scientific">Mus musculus</name>
    <name type="common">Mouse</name>
    <dbReference type="NCBI Taxonomy" id="10090"/>
    <lineage>
        <taxon>Eukaryota</taxon>
        <taxon>Metazoa</taxon>
        <taxon>Chordata</taxon>
        <taxon>Craniata</taxon>
        <taxon>Vertebrata</taxon>
        <taxon>Euteleostomi</taxon>
        <taxon>Mammalia</taxon>
        <taxon>Eutheria</taxon>
        <taxon>Euarchontoglires</taxon>
        <taxon>Glires</taxon>
        <taxon>Rodentia</taxon>
        <taxon>Myomorpha</taxon>
        <taxon>Muroidea</taxon>
        <taxon>Muridae</taxon>
        <taxon>Murinae</taxon>
        <taxon>Mus</taxon>
        <taxon>Mus</taxon>
    </lineage>
</organism>
<keyword id="KW-0053">Apoptosis</keyword>
<keyword id="KW-0175">Coiled coil</keyword>
<keyword id="KW-0963">Cytoplasm</keyword>
<keyword id="KW-0206">Cytoskeleton</keyword>
<keyword id="KW-0479">Metal-binding</keyword>
<keyword id="KW-0539">Nucleus</keyword>
<keyword id="KW-0597">Phosphoprotein</keyword>
<keyword id="KW-1185">Reference proteome</keyword>
<keyword id="KW-0808">Transferase</keyword>
<keyword id="KW-0833">Ubl conjugation pathway</keyword>
<keyword id="KW-0862">Zinc</keyword>
<keyword id="KW-0863">Zinc-finger</keyword>
<sequence length="500" mass="57312">MEVSSRPPSNFDPGNYVEMSDPTTTHLPSKVVIQDLTTELHCPLCNDWFRDPLMLTCGHNFCQDCIQSFWKVHSKETFCPDCKMLCQYSNCTFNLVLEKLVEKIKKLPLLKGHPQCPEHGENLKLFSKPEGKMICFQCKDARLSMGQSKDFLQISEAVRFFTEELAIYQSQLQTTLKELQSLRTIQKDAISAYKDNKIQLQQNLSLEFLKLHQFLHNKEKDILNDLRDEGKLLNEEMEVNLNQIQEQCLVAKDMLATIQARMEQQNSFDFLTDITKLIESMEKGMKTIVPRQLIAKKLSLGRFKGPIQYIIWKEMQAILSPGPSQLTLDPKTAHPNLVLSKSQTSVCHCDVKQVMPDDPERFDSSVAVLGSKGFTSGKWYWEIEVGKKTKWTIGVVRESIIRKGSCPLTPEQGFWLLRLRNQTDLKALDLPSRSLTLGDLRRVGVYLDYEGGQVSFYNATTMTHLYTFSSVFQEKLFPYLCPCLNDGGENKEPLHIVHPQ</sequence>
<feature type="chain" id="PRO_0000278237" description="E3 ubiquitin-protein ligase TRIM69">
    <location>
        <begin position="1"/>
        <end position="500"/>
    </location>
</feature>
<feature type="domain" description="B30.2/SPRY" evidence="5">
    <location>
        <begin position="306"/>
        <end position="500"/>
    </location>
</feature>
<feature type="zinc finger region" description="RING-type" evidence="4">
    <location>
        <begin position="42"/>
        <end position="83"/>
    </location>
</feature>
<feature type="region of interest" description="Necessary for nuclear localization">
    <location>
        <begin position="1"/>
        <end position="153"/>
    </location>
</feature>
<feature type="region of interest" description="Disordered" evidence="6">
    <location>
        <begin position="1"/>
        <end position="22"/>
    </location>
</feature>
<feature type="coiled-coil region" evidence="3">
    <location>
        <begin position="217"/>
        <end position="256"/>
    </location>
</feature>
<feature type="modified residue" description="Phosphoserine" evidence="1">
    <location>
        <position position="342"/>
    </location>
</feature>
<feature type="sequence conflict" description="In Ref. 1; AAL41031." evidence="10" ref="1">
    <original>P</original>
    <variation>A</variation>
    <location>
        <position position="117"/>
    </location>
</feature>
<feature type="sequence conflict" description="In Ref. 1; AAL41031." evidence="10" ref="1">
    <original>M</original>
    <variation>L</variation>
    <location>
        <position position="355"/>
    </location>
</feature>
<feature type="sequence conflict" description="In Ref. 1; AAL41031." evidence="10" ref="1">
    <original>F</original>
    <variation>L</variation>
    <location>
        <position position="362"/>
    </location>
</feature>
<accession>Q80X56</accession>
<accession>Q8VHZ6</accession>
<evidence type="ECO:0000250" key="1">
    <source>
        <dbReference type="UniProtKB" id="Q5BK82"/>
    </source>
</evidence>
<evidence type="ECO:0000250" key="2">
    <source>
        <dbReference type="UniProtKB" id="Q86WT6"/>
    </source>
</evidence>
<evidence type="ECO:0000255" key="3"/>
<evidence type="ECO:0000255" key="4">
    <source>
        <dbReference type="PROSITE-ProRule" id="PRU00175"/>
    </source>
</evidence>
<evidence type="ECO:0000255" key="5">
    <source>
        <dbReference type="PROSITE-ProRule" id="PRU00548"/>
    </source>
</evidence>
<evidence type="ECO:0000256" key="6">
    <source>
        <dbReference type="SAM" id="MobiDB-lite"/>
    </source>
</evidence>
<evidence type="ECO:0000269" key="7">
    <source>
    </source>
</evidence>
<evidence type="ECO:0000269" key="8">
    <source>
    </source>
</evidence>
<evidence type="ECO:0000269" key="9">
    <source>
    </source>
</evidence>
<evidence type="ECO:0000305" key="10"/>